<dbReference type="EMBL" id="L42023">
    <property type="protein sequence ID" value="AAC21922.1"/>
    <property type="molecule type" value="Genomic_DNA"/>
</dbReference>
<dbReference type="PIR" id="I64004">
    <property type="entry name" value="I64004"/>
</dbReference>
<dbReference type="RefSeq" id="NP_438425.1">
    <property type="nucleotide sequence ID" value="NC_000907.1"/>
</dbReference>
<dbReference type="SMR" id="P43973"/>
<dbReference type="STRING" id="71421.HI_0256"/>
<dbReference type="DNASU" id="949378"/>
<dbReference type="EnsemblBacteria" id="AAC21922">
    <property type="protein sequence ID" value="AAC21922"/>
    <property type="gene ID" value="HI_0256"/>
</dbReference>
<dbReference type="KEGG" id="hin:HI_0256"/>
<dbReference type="PATRIC" id="fig|71421.8.peg.271"/>
<dbReference type="eggNOG" id="COG3317">
    <property type="taxonomic scope" value="Bacteria"/>
</dbReference>
<dbReference type="HOGENOM" id="CLU_1281703_0_0_6"/>
<dbReference type="OrthoDB" id="5686855at2"/>
<dbReference type="PhylomeDB" id="P43973"/>
<dbReference type="BioCyc" id="HINF71421:G1GJ1-270-MONOMER"/>
<dbReference type="Proteomes" id="UP000000579">
    <property type="component" value="Chromosome"/>
</dbReference>
<dbReference type="GO" id="GO:0009279">
    <property type="term" value="C:cell outer membrane"/>
    <property type="evidence" value="ECO:0007669"/>
    <property type="project" value="UniProtKB-SubCell"/>
</dbReference>
<dbReference type="Gene3D" id="3.30.530.50">
    <property type="match status" value="1"/>
</dbReference>
<dbReference type="InterPro" id="IPR010653">
    <property type="entry name" value="NlpB/DapX"/>
</dbReference>
<dbReference type="Pfam" id="PF06804">
    <property type="entry name" value="Lipoprotein_18"/>
    <property type="match status" value="1"/>
</dbReference>
<dbReference type="PROSITE" id="PS51257">
    <property type="entry name" value="PROKAR_LIPOPROTEIN"/>
    <property type="match status" value="1"/>
</dbReference>
<accession>P43973</accession>
<organism>
    <name type="scientific">Haemophilus influenzae (strain ATCC 51907 / DSM 11121 / KW20 / Rd)</name>
    <dbReference type="NCBI Taxonomy" id="71421"/>
    <lineage>
        <taxon>Bacteria</taxon>
        <taxon>Pseudomonadati</taxon>
        <taxon>Pseudomonadota</taxon>
        <taxon>Gammaproteobacteria</taxon>
        <taxon>Pasteurellales</taxon>
        <taxon>Pasteurellaceae</taxon>
        <taxon>Haemophilus</taxon>
    </lineage>
</organism>
<feature type="signal peptide" evidence="2">
    <location>
        <begin position="1"/>
        <end position="16"/>
    </location>
</feature>
<feature type="chain" id="PRO_0000077903" description="Outer membrane protein assembly factor BamC homolog">
    <location>
        <begin position="17"/>
        <end position="215"/>
    </location>
</feature>
<feature type="lipid moiety-binding region" description="N-palmitoyl cysteine" evidence="2">
    <location>
        <position position="17"/>
    </location>
</feature>
<feature type="lipid moiety-binding region" description="S-diacylglycerol cysteine" evidence="2">
    <location>
        <position position="17"/>
    </location>
</feature>
<comment type="subcellular location">
    <subcellularLocation>
        <location evidence="1">Cell outer membrane</location>
        <topology evidence="2">Lipid-anchor</topology>
    </subcellularLocation>
</comment>
<comment type="similarity">
    <text evidence="3">Belongs to the BamC family.</text>
</comment>
<comment type="caution">
    <text evidence="3">This sequence is shorter than orthologs.</text>
</comment>
<evidence type="ECO:0000250" key="1"/>
<evidence type="ECO:0000255" key="2">
    <source>
        <dbReference type="PROSITE-ProRule" id="PRU00303"/>
    </source>
</evidence>
<evidence type="ECO:0000305" key="3"/>
<reference key="1">
    <citation type="journal article" date="1995" name="Science">
        <title>Whole-genome random sequencing and assembly of Haemophilus influenzae Rd.</title>
        <authorList>
            <person name="Fleischmann R.D."/>
            <person name="Adams M.D."/>
            <person name="White O."/>
            <person name="Clayton R.A."/>
            <person name="Kirkness E.F."/>
            <person name="Kerlavage A.R."/>
            <person name="Bult C.J."/>
            <person name="Tomb J.-F."/>
            <person name="Dougherty B.A."/>
            <person name="Merrick J.M."/>
            <person name="McKenney K."/>
            <person name="Sutton G.G."/>
            <person name="FitzHugh W."/>
            <person name="Fields C.A."/>
            <person name="Gocayne J.D."/>
            <person name="Scott J.D."/>
            <person name="Shirley R."/>
            <person name="Liu L.-I."/>
            <person name="Glodek A."/>
            <person name="Kelley J.M."/>
            <person name="Weidman J.F."/>
            <person name="Phillips C.A."/>
            <person name="Spriggs T."/>
            <person name="Hedblom E."/>
            <person name="Cotton M.D."/>
            <person name="Utterback T.R."/>
            <person name="Hanna M.C."/>
            <person name="Nguyen D.T."/>
            <person name="Saudek D.M."/>
            <person name="Brandon R.C."/>
            <person name="Fine L.D."/>
            <person name="Fritchman J.L."/>
            <person name="Fuhrmann J.L."/>
            <person name="Geoghagen N.S.M."/>
            <person name="Gnehm C.L."/>
            <person name="McDonald L.A."/>
            <person name="Small K.V."/>
            <person name="Fraser C.M."/>
            <person name="Smith H.O."/>
            <person name="Venter J.C."/>
        </authorList>
    </citation>
    <scope>NUCLEOTIDE SEQUENCE [LARGE SCALE GENOMIC DNA]</scope>
    <source>
        <strain>ATCC 51907 / DSM 11121 / KW20 / Rd</strain>
    </source>
</reference>
<reference key="2">
    <citation type="journal article" date="2000" name="Electrophoresis">
        <title>Two-dimensional map of the proteome of Haemophilus influenzae.</title>
        <authorList>
            <person name="Langen H."/>
            <person name="Takacs B."/>
            <person name="Evers S."/>
            <person name="Berndt P."/>
            <person name="Lahm H.W."/>
            <person name="Wipf B."/>
            <person name="Gray C."/>
            <person name="Fountoulakis M."/>
        </authorList>
    </citation>
    <scope>IDENTIFICATION BY MASS SPECTROMETRY</scope>
    <source>
        <strain>ATCC 51907 / DSM 11121 / KW20 / Rd</strain>
    </source>
</reference>
<name>BAMCH_HAEIN</name>
<gene>
    <name type="ordered locus">HI_0256</name>
</gene>
<sequence length="215" mass="24012">MKKIILNLVTAIILAGCSSNPETLKATNDSFQKSETSIPHFSPLATGGVQLPKADDSYSLPNIEVKKGEDIDIRPPLIPLAIIQNSITKFDGERSLIVYPKQQAKLYNLQQVERLLKEEGISSTTDGSILTTDWAKTERIGDKSIEIKYQIEQVMTADVSALTVSILHMRRDGIIFTPNVSDKQYYTSERLNRIVLTLTTAYNKQLRDLSSTLIQ</sequence>
<proteinExistence type="evidence at protein level"/>
<keyword id="KW-0998">Cell outer membrane</keyword>
<keyword id="KW-0449">Lipoprotein</keyword>
<keyword id="KW-0472">Membrane</keyword>
<keyword id="KW-0564">Palmitate</keyword>
<keyword id="KW-1185">Reference proteome</keyword>
<keyword id="KW-0732">Signal</keyword>
<protein>
    <recommendedName>
        <fullName>Outer membrane protein assembly factor BamC homolog</fullName>
    </recommendedName>
</protein>